<feature type="chain" id="PRO_0000151729" description="3,4-dihydroxy-2-butanone 4-phosphate synthase">
    <location>
        <begin position="1"/>
        <end position="363"/>
    </location>
</feature>
<feature type="region of interest" description="DHBP synthase">
    <location>
        <begin position="1"/>
        <end position="202"/>
    </location>
</feature>
<feature type="region of interest" description="GTP cyclohydrolase II-like">
    <location>
        <begin position="205"/>
        <end position="363"/>
    </location>
</feature>
<feature type="binding site" evidence="1">
    <location>
        <begin position="28"/>
        <end position="29"/>
    </location>
    <ligand>
        <name>D-ribulose 5-phosphate</name>
        <dbReference type="ChEBI" id="CHEBI:58121"/>
    </ligand>
</feature>
<feature type="binding site" evidence="1">
    <location>
        <position position="29"/>
    </location>
    <ligand>
        <name>Mg(2+)</name>
        <dbReference type="ChEBI" id="CHEBI:18420"/>
        <label>1</label>
    </ligand>
</feature>
<feature type="binding site" evidence="1">
    <location>
        <position position="29"/>
    </location>
    <ligand>
        <name>Mg(2+)</name>
        <dbReference type="ChEBI" id="CHEBI:18420"/>
        <label>2</label>
    </ligand>
</feature>
<feature type="binding site" evidence="1">
    <location>
        <position position="33"/>
    </location>
    <ligand>
        <name>D-ribulose 5-phosphate</name>
        <dbReference type="ChEBI" id="CHEBI:58121"/>
    </ligand>
</feature>
<feature type="binding site" evidence="1">
    <location>
        <begin position="141"/>
        <end position="145"/>
    </location>
    <ligand>
        <name>D-ribulose 5-phosphate</name>
        <dbReference type="ChEBI" id="CHEBI:58121"/>
    </ligand>
</feature>
<feature type="binding site" evidence="1">
    <location>
        <position position="144"/>
    </location>
    <ligand>
        <name>Mg(2+)</name>
        <dbReference type="ChEBI" id="CHEBI:18420"/>
        <label>2</label>
    </ligand>
</feature>
<feature type="binding site" evidence="1">
    <location>
        <position position="165"/>
    </location>
    <ligand>
        <name>D-ribulose 5-phosphate</name>
        <dbReference type="ChEBI" id="CHEBI:58121"/>
    </ligand>
</feature>
<feature type="site" description="Essential for catalytic activity" evidence="1">
    <location>
        <position position="127"/>
    </location>
</feature>
<feature type="site" description="Essential for catalytic activity" evidence="1">
    <location>
        <position position="165"/>
    </location>
</feature>
<organism>
    <name type="scientific">Neisseria meningitidis serogroup A / serotype 4A (strain DSM 15465 / Z2491)</name>
    <dbReference type="NCBI Taxonomy" id="122587"/>
    <lineage>
        <taxon>Bacteria</taxon>
        <taxon>Pseudomonadati</taxon>
        <taxon>Pseudomonadota</taxon>
        <taxon>Betaproteobacteria</taxon>
        <taxon>Neisseriales</taxon>
        <taxon>Neisseriaceae</taxon>
        <taxon>Neisseria</taxon>
    </lineage>
</organism>
<proteinExistence type="inferred from homology"/>
<gene>
    <name type="primary">ribB</name>
    <name type="ordered locus">NMA1429</name>
</gene>
<reference key="1">
    <citation type="journal article" date="2000" name="Nature">
        <title>Complete DNA sequence of a serogroup A strain of Neisseria meningitidis Z2491.</title>
        <authorList>
            <person name="Parkhill J."/>
            <person name="Achtman M."/>
            <person name="James K.D."/>
            <person name="Bentley S.D."/>
            <person name="Churcher C.M."/>
            <person name="Klee S.R."/>
            <person name="Morelli G."/>
            <person name="Basham D."/>
            <person name="Brown D."/>
            <person name="Chillingworth T."/>
            <person name="Davies R.M."/>
            <person name="Davis P."/>
            <person name="Devlin K."/>
            <person name="Feltwell T."/>
            <person name="Hamlin N."/>
            <person name="Holroyd S."/>
            <person name="Jagels K."/>
            <person name="Leather S."/>
            <person name="Moule S."/>
            <person name="Mungall K.L."/>
            <person name="Quail M.A."/>
            <person name="Rajandream M.A."/>
            <person name="Rutherford K.M."/>
            <person name="Simmonds M."/>
            <person name="Skelton J."/>
            <person name="Whitehead S."/>
            <person name="Spratt B.G."/>
            <person name="Barrell B.G."/>
        </authorList>
    </citation>
    <scope>NUCLEOTIDE SEQUENCE [LARGE SCALE GENOMIC DNA]</scope>
    <source>
        <strain>DSM 15465 / Z2491</strain>
    </source>
</reference>
<keyword id="KW-0456">Lyase</keyword>
<keyword id="KW-0460">Magnesium</keyword>
<keyword id="KW-0464">Manganese</keyword>
<keyword id="KW-0479">Metal-binding</keyword>
<keyword id="KW-0686">Riboflavin biosynthesis</keyword>
<protein>
    <recommendedName>
        <fullName>3,4-dihydroxy-2-butanone 4-phosphate synthase</fullName>
        <shortName>DHBP synthase</shortName>
        <ecNumber>4.1.99.12</ecNumber>
    </recommendedName>
</protein>
<name>RIBB_NEIMA</name>
<evidence type="ECO:0000250" key="1"/>
<evidence type="ECO:0000305" key="2"/>
<sequence length="363" mass="39398">MSHISPIPEILADIKVGKMVIITDAEDRENEGDLLMAAQFVTPEAINFMIKHARGLVCLPMDGEMVEKLGLPMMTQKNGAQYGTNFTVSIEAAHGITTGISAADRALTIQTAVSPTAKPEDIVQPGHIFPLRAQKGGVLVRAGHTEAGVDLAQMNGLIPAAVICEIINDDGTMARMPELMKFAEEHKLKIGTITDLIEYRSRTESLLEDMGNAPVQTPWGEFQQHVYVDKLSGETHLALVKGTPSADTETLVRVHEPFSVMDFIQANPRHSWSLPKALERVQQAESGVVILLHRTEDGASLLDRTLPKGANQAYKWDSKSYGIGAQILAGLNVKKLRVLGQPSSFTGLTGFGLEVVGFEEAEK</sequence>
<accession>Q9JU97</accession>
<accession>A1IS39</accession>
<comment type="function">
    <text evidence="1">Catalyzes the conversion of D-ribulose 5-phosphate to formate and 3,4-dihydroxy-2-butanone 4-phosphate.</text>
</comment>
<comment type="catalytic activity">
    <reaction>
        <text>D-ribulose 5-phosphate = (2S)-2-hydroxy-3-oxobutyl phosphate + formate + H(+)</text>
        <dbReference type="Rhea" id="RHEA:18457"/>
        <dbReference type="ChEBI" id="CHEBI:15378"/>
        <dbReference type="ChEBI" id="CHEBI:15740"/>
        <dbReference type="ChEBI" id="CHEBI:58121"/>
        <dbReference type="ChEBI" id="CHEBI:58830"/>
        <dbReference type="EC" id="4.1.99.12"/>
    </reaction>
</comment>
<comment type="cofactor">
    <cofactor evidence="1">
        <name>Mg(2+)</name>
        <dbReference type="ChEBI" id="CHEBI:18420"/>
    </cofactor>
    <cofactor evidence="1">
        <name>Mn(2+)</name>
        <dbReference type="ChEBI" id="CHEBI:29035"/>
    </cofactor>
    <text evidence="1">Binds 2 divalent metal cations per subunit. Magnesium or manganese.</text>
</comment>
<comment type="pathway">
    <text>Cofactor biosynthesis; riboflavin biosynthesis; 2-hydroxy-3-oxobutyl phosphate from D-ribulose 5-phosphate: step 1/1.</text>
</comment>
<comment type="similarity">
    <text evidence="2">In the N-terminal section; belongs to the DHBP synthase family.</text>
</comment>
<comment type="similarity">
    <text evidence="2">In the C-terminal section; belongs to the GTP cyclohydrolase II family.</text>
</comment>
<dbReference type="EC" id="4.1.99.12"/>
<dbReference type="EMBL" id="AL157959">
    <property type="protein sequence ID" value="CAM08590.1"/>
    <property type="molecule type" value="Genomic_DNA"/>
</dbReference>
<dbReference type="PIR" id="C81912">
    <property type="entry name" value="C81912"/>
</dbReference>
<dbReference type="SMR" id="Q9JU97"/>
<dbReference type="EnsemblBacteria" id="CAM08590">
    <property type="protein sequence ID" value="CAM08590"/>
    <property type="gene ID" value="NMA1429"/>
</dbReference>
<dbReference type="KEGG" id="nma:NMA1429"/>
<dbReference type="HOGENOM" id="CLU_020273_1_2_4"/>
<dbReference type="UniPathway" id="UPA00275">
    <property type="reaction ID" value="UER00399"/>
</dbReference>
<dbReference type="Proteomes" id="UP000000626">
    <property type="component" value="Chromosome"/>
</dbReference>
<dbReference type="GO" id="GO:0005829">
    <property type="term" value="C:cytosol"/>
    <property type="evidence" value="ECO:0007669"/>
    <property type="project" value="TreeGrafter"/>
</dbReference>
<dbReference type="GO" id="GO:0008686">
    <property type="term" value="F:3,4-dihydroxy-2-butanone-4-phosphate synthase activity"/>
    <property type="evidence" value="ECO:0007669"/>
    <property type="project" value="UniProtKB-UniRule"/>
</dbReference>
<dbReference type="GO" id="GO:0003935">
    <property type="term" value="F:GTP cyclohydrolase II activity"/>
    <property type="evidence" value="ECO:0007669"/>
    <property type="project" value="TreeGrafter"/>
</dbReference>
<dbReference type="GO" id="GO:0000287">
    <property type="term" value="F:magnesium ion binding"/>
    <property type="evidence" value="ECO:0007669"/>
    <property type="project" value="UniProtKB-UniRule"/>
</dbReference>
<dbReference type="GO" id="GO:0030145">
    <property type="term" value="F:manganese ion binding"/>
    <property type="evidence" value="ECO:0007669"/>
    <property type="project" value="UniProtKB-UniRule"/>
</dbReference>
<dbReference type="GO" id="GO:0009231">
    <property type="term" value="P:riboflavin biosynthetic process"/>
    <property type="evidence" value="ECO:0007669"/>
    <property type="project" value="UniProtKB-UniRule"/>
</dbReference>
<dbReference type="FunFam" id="3.40.50.10990:FF:000007">
    <property type="entry name" value="3,4-dihydroxy-2-butanone 4-phosphate synthase"/>
    <property type="match status" value="1"/>
</dbReference>
<dbReference type="FunFam" id="3.90.870.10:FF:000001">
    <property type="entry name" value="Riboflavin biosynthesis protein RibBA"/>
    <property type="match status" value="1"/>
</dbReference>
<dbReference type="Gene3D" id="3.90.870.10">
    <property type="entry name" value="DHBP synthase"/>
    <property type="match status" value="1"/>
</dbReference>
<dbReference type="Gene3D" id="3.40.50.10990">
    <property type="entry name" value="GTP cyclohydrolase II"/>
    <property type="match status" value="1"/>
</dbReference>
<dbReference type="HAMAP" id="MF_00180">
    <property type="entry name" value="RibB"/>
    <property type="match status" value="1"/>
</dbReference>
<dbReference type="InterPro" id="IPR017945">
    <property type="entry name" value="DHBP_synth_RibB-like_a/b_dom"/>
</dbReference>
<dbReference type="InterPro" id="IPR000422">
    <property type="entry name" value="DHBP_synthase_RibB"/>
</dbReference>
<dbReference type="InterPro" id="IPR032677">
    <property type="entry name" value="GTP_cyclohydro_II"/>
</dbReference>
<dbReference type="InterPro" id="IPR036144">
    <property type="entry name" value="RibA-like_sf"/>
</dbReference>
<dbReference type="NCBIfam" id="NF010626">
    <property type="entry name" value="PRK14019.1"/>
    <property type="match status" value="1"/>
</dbReference>
<dbReference type="NCBIfam" id="TIGR00506">
    <property type="entry name" value="ribB"/>
    <property type="match status" value="1"/>
</dbReference>
<dbReference type="PANTHER" id="PTHR21327:SF34">
    <property type="entry name" value="3,4-DIHYDROXY-2-BUTANONE 4-PHOSPHATE SYNTHASE"/>
    <property type="match status" value="1"/>
</dbReference>
<dbReference type="PANTHER" id="PTHR21327">
    <property type="entry name" value="GTP CYCLOHYDROLASE II-RELATED"/>
    <property type="match status" value="1"/>
</dbReference>
<dbReference type="Pfam" id="PF00926">
    <property type="entry name" value="DHBP_synthase"/>
    <property type="match status" value="1"/>
</dbReference>
<dbReference type="Pfam" id="PF00925">
    <property type="entry name" value="GTP_cyclohydro2"/>
    <property type="match status" value="1"/>
</dbReference>
<dbReference type="PIRSF" id="PIRSF001259">
    <property type="entry name" value="RibA"/>
    <property type="match status" value="1"/>
</dbReference>
<dbReference type="SUPFAM" id="SSF142695">
    <property type="entry name" value="RibA-like"/>
    <property type="match status" value="1"/>
</dbReference>
<dbReference type="SUPFAM" id="SSF55821">
    <property type="entry name" value="YrdC/RibB"/>
    <property type="match status" value="1"/>
</dbReference>